<sequence length="403" mass="43678">MSSYLFTSESVSEGHPDKIADQISDAVLDAILAQDKRARVACETMVKTGVAIVAGEVTTSAWIDLEALTRKVILDIGYNSSDVGFDGETCGVLNLIGKQSPDINQGVDRKNPEQQGAGDQGLMFGYATNETDSYMPAAIHLSHRLVEQQAKIRKKKNSALSWLRPDAKSQVTLRYEDGVATAIDAVVLSTQHDPGVKQKDLIEAVREEILKPVLPAKWLHKGTKFHINPTGKFVIGGPVGDCGLTGRKIIVDTYGGWARHGGGAFSGKDPSKVDRSAAYAARYVAKNVVAAGLADRCEVQVSYAIGVAEPTSISVTTFGTGKIADELIEKLIRKHFDLRPFGIIQMLDLIHPMYQQTASYGHFGRKPKDFTYTDGTGAQHSATSFSWEKTDRAEALRAAAKLK</sequence>
<reference key="1">
    <citation type="journal article" date="2008" name="J. Biotechnol.">
        <title>The genome of Xanthomonas campestris pv. campestris B100 and its use for the reconstruction of metabolic pathways involved in xanthan biosynthesis.</title>
        <authorList>
            <person name="Vorhoelter F.-J."/>
            <person name="Schneiker S."/>
            <person name="Goesmann A."/>
            <person name="Krause L."/>
            <person name="Bekel T."/>
            <person name="Kaiser O."/>
            <person name="Linke B."/>
            <person name="Patschkowski T."/>
            <person name="Rueckert C."/>
            <person name="Schmid J."/>
            <person name="Sidhu V.K."/>
            <person name="Sieber V."/>
            <person name="Tauch A."/>
            <person name="Watt S.A."/>
            <person name="Weisshaar B."/>
            <person name="Becker A."/>
            <person name="Niehaus K."/>
            <person name="Puehler A."/>
        </authorList>
    </citation>
    <scope>NUCLEOTIDE SEQUENCE [LARGE SCALE GENOMIC DNA]</scope>
    <source>
        <strain>B100</strain>
    </source>
</reference>
<name>METK_XANCB</name>
<feature type="chain" id="PRO_1000093100" description="S-adenosylmethionine synthase">
    <location>
        <begin position="1"/>
        <end position="403"/>
    </location>
</feature>
<feature type="region of interest" description="Flexible loop" evidence="1">
    <location>
        <begin position="99"/>
        <end position="109"/>
    </location>
</feature>
<feature type="binding site" description="in other chain" evidence="1">
    <location>
        <position position="15"/>
    </location>
    <ligand>
        <name>ATP</name>
        <dbReference type="ChEBI" id="CHEBI:30616"/>
        <note>ligand shared between two neighboring subunits</note>
    </ligand>
</feature>
<feature type="binding site" evidence="1">
    <location>
        <position position="17"/>
    </location>
    <ligand>
        <name>Mg(2+)</name>
        <dbReference type="ChEBI" id="CHEBI:18420"/>
    </ligand>
</feature>
<feature type="binding site" evidence="1">
    <location>
        <position position="43"/>
    </location>
    <ligand>
        <name>K(+)</name>
        <dbReference type="ChEBI" id="CHEBI:29103"/>
    </ligand>
</feature>
<feature type="binding site" description="in other chain" evidence="1">
    <location>
        <position position="56"/>
    </location>
    <ligand>
        <name>L-methionine</name>
        <dbReference type="ChEBI" id="CHEBI:57844"/>
        <note>ligand shared between two neighboring subunits</note>
    </ligand>
</feature>
<feature type="binding site" description="in other chain" evidence="1">
    <location>
        <position position="99"/>
    </location>
    <ligand>
        <name>L-methionine</name>
        <dbReference type="ChEBI" id="CHEBI:57844"/>
        <note>ligand shared between two neighboring subunits</note>
    </ligand>
</feature>
<feature type="binding site" description="in other chain" evidence="1">
    <location>
        <begin position="166"/>
        <end position="168"/>
    </location>
    <ligand>
        <name>ATP</name>
        <dbReference type="ChEBI" id="CHEBI:30616"/>
        <note>ligand shared between two neighboring subunits</note>
    </ligand>
</feature>
<feature type="binding site" description="in other chain" evidence="1">
    <location>
        <begin position="232"/>
        <end position="233"/>
    </location>
    <ligand>
        <name>ATP</name>
        <dbReference type="ChEBI" id="CHEBI:30616"/>
        <note>ligand shared between two neighboring subunits</note>
    </ligand>
</feature>
<feature type="binding site" evidence="1">
    <location>
        <position position="241"/>
    </location>
    <ligand>
        <name>ATP</name>
        <dbReference type="ChEBI" id="CHEBI:30616"/>
        <note>ligand shared between two neighboring subunits</note>
    </ligand>
</feature>
<feature type="binding site" evidence="1">
    <location>
        <position position="241"/>
    </location>
    <ligand>
        <name>L-methionine</name>
        <dbReference type="ChEBI" id="CHEBI:57844"/>
        <note>ligand shared between two neighboring subunits</note>
    </ligand>
</feature>
<feature type="binding site" description="in other chain" evidence="1">
    <location>
        <begin position="247"/>
        <end position="248"/>
    </location>
    <ligand>
        <name>ATP</name>
        <dbReference type="ChEBI" id="CHEBI:30616"/>
        <note>ligand shared between two neighboring subunits</note>
    </ligand>
</feature>
<feature type="binding site" evidence="1">
    <location>
        <position position="264"/>
    </location>
    <ligand>
        <name>ATP</name>
        <dbReference type="ChEBI" id="CHEBI:30616"/>
        <note>ligand shared between two neighboring subunits</note>
    </ligand>
</feature>
<feature type="binding site" evidence="1">
    <location>
        <position position="268"/>
    </location>
    <ligand>
        <name>ATP</name>
        <dbReference type="ChEBI" id="CHEBI:30616"/>
        <note>ligand shared between two neighboring subunits</note>
    </ligand>
</feature>
<feature type="binding site" description="in other chain" evidence="1">
    <location>
        <position position="272"/>
    </location>
    <ligand>
        <name>L-methionine</name>
        <dbReference type="ChEBI" id="CHEBI:57844"/>
        <note>ligand shared between two neighboring subunits</note>
    </ligand>
</feature>
<gene>
    <name evidence="1" type="primary">metK</name>
    <name type="ordered locus">xcc-b100_3592</name>
</gene>
<accession>B0RV66</accession>
<dbReference type="EC" id="2.5.1.6" evidence="1"/>
<dbReference type="EMBL" id="AM920689">
    <property type="protein sequence ID" value="CAP52957.1"/>
    <property type="molecule type" value="Genomic_DNA"/>
</dbReference>
<dbReference type="SMR" id="B0RV66"/>
<dbReference type="KEGG" id="xca:xcc-b100_3592"/>
<dbReference type="HOGENOM" id="CLU_041802_1_1_6"/>
<dbReference type="UniPathway" id="UPA00315">
    <property type="reaction ID" value="UER00080"/>
</dbReference>
<dbReference type="Proteomes" id="UP000001188">
    <property type="component" value="Chromosome"/>
</dbReference>
<dbReference type="GO" id="GO:0005737">
    <property type="term" value="C:cytoplasm"/>
    <property type="evidence" value="ECO:0007669"/>
    <property type="project" value="UniProtKB-SubCell"/>
</dbReference>
<dbReference type="GO" id="GO:0005524">
    <property type="term" value="F:ATP binding"/>
    <property type="evidence" value="ECO:0007669"/>
    <property type="project" value="UniProtKB-UniRule"/>
</dbReference>
<dbReference type="GO" id="GO:0000287">
    <property type="term" value="F:magnesium ion binding"/>
    <property type="evidence" value="ECO:0007669"/>
    <property type="project" value="UniProtKB-UniRule"/>
</dbReference>
<dbReference type="GO" id="GO:0004478">
    <property type="term" value="F:methionine adenosyltransferase activity"/>
    <property type="evidence" value="ECO:0007669"/>
    <property type="project" value="UniProtKB-UniRule"/>
</dbReference>
<dbReference type="GO" id="GO:0006730">
    <property type="term" value="P:one-carbon metabolic process"/>
    <property type="evidence" value="ECO:0007669"/>
    <property type="project" value="UniProtKB-KW"/>
</dbReference>
<dbReference type="GO" id="GO:0006556">
    <property type="term" value="P:S-adenosylmethionine biosynthetic process"/>
    <property type="evidence" value="ECO:0007669"/>
    <property type="project" value="UniProtKB-UniRule"/>
</dbReference>
<dbReference type="CDD" id="cd18079">
    <property type="entry name" value="S-AdoMet_synt"/>
    <property type="match status" value="1"/>
</dbReference>
<dbReference type="FunFam" id="3.30.300.10:FF:000003">
    <property type="entry name" value="S-adenosylmethionine synthase"/>
    <property type="match status" value="1"/>
</dbReference>
<dbReference type="FunFam" id="3.30.300.10:FF:000004">
    <property type="entry name" value="S-adenosylmethionine synthase"/>
    <property type="match status" value="1"/>
</dbReference>
<dbReference type="Gene3D" id="3.30.300.10">
    <property type="match status" value="3"/>
</dbReference>
<dbReference type="HAMAP" id="MF_00086">
    <property type="entry name" value="S_AdoMet_synth1"/>
    <property type="match status" value="1"/>
</dbReference>
<dbReference type="InterPro" id="IPR022631">
    <property type="entry name" value="ADOMET_SYNTHASE_CS"/>
</dbReference>
<dbReference type="InterPro" id="IPR022630">
    <property type="entry name" value="S-AdoMet_synt_C"/>
</dbReference>
<dbReference type="InterPro" id="IPR022629">
    <property type="entry name" value="S-AdoMet_synt_central"/>
</dbReference>
<dbReference type="InterPro" id="IPR022628">
    <property type="entry name" value="S-AdoMet_synt_N"/>
</dbReference>
<dbReference type="InterPro" id="IPR002133">
    <property type="entry name" value="S-AdoMet_synthetase"/>
</dbReference>
<dbReference type="InterPro" id="IPR022636">
    <property type="entry name" value="S-AdoMet_synthetase_sfam"/>
</dbReference>
<dbReference type="NCBIfam" id="TIGR01034">
    <property type="entry name" value="metK"/>
    <property type="match status" value="1"/>
</dbReference>
<dbReference type="PANTHER" id="PTHR11964">
    <property type="entry name" value="S-ADENOSYLMETHIONINE SYNTHETASE"/>
    <property type="match status" value="1"/>
</dbReference>
<dbReference type="Pfam" id="PF02773">
    <property type="entry name" value="S-AdoMet_synt_C"/>
    <property type="match status" value="1"/>
</dbReference>
<dbReference type="Pfam" id="PF02772">
    <property type="entry name" value="S-AdoMet_synt_M"/>
    <property type="match status" value="1"/>
</dbReference>
<dbReference type="Pfam" id="PF00438">
    <property type="entry name" value="S-AdoMet_synt_N"/>
    <property type="match status" value="1"/>
</dbReference>
<dbReference type="PIRSF" id="PIRSF000497">
    <property type="entry name" value="MAT"/>
    <property type="match status" value="1"/>
</dbReference>
<dbReference type="SUPFAM" id="SSF55973">
    <property type="entry name" value="S-adenosylmethionine synthetase"/>
    <property type="match status" value="3"/>
</dbReference>
<dbReference type="PROSITE" id="PS00376">
    <property type="entry name" value="ADOMET_SYNTHASE_1"/>
    <property type="match status" value="1"/>
</dbReference>
<dbReference type="PROSITE" id="PS00377">
    <property type="entry name" value="ADOMET_SYNTHASE_2"/>
    <property type="match status" value="1"/>
</dbReference>
<protein>
    <recommendedName>
        <fullName evidence="1">S-adenosylmethionine synthase</fullName>
        <shortName evidence="1">AdoMet synthase</shortName>
        <ecNumber evidence="1">2.5.1.6</ecNumber>
    </recommendedName>
    <alternativeName>
        <fullName evidence="1">MAT</fullName>
    </alternativeName>
    <alternativeName>
        <fullName evidence="1">Methionine adenosyltransferase</fullName>
    </alternativeName>
</protein>
<organism>
    <name type="scientific">Xanthomonas campestris pv. campestris (strain B100)</name>
    <dbReference type="NCBI Taxonomy" id="509169"/>
    <lineage>
        <taxon>Bacteria</taxon>
        <taxon>Pseudomonadati</taxon>
        <taxon>Pseudomonadota</taxon>
        <taxon>Gammaproteobacteria</taxon>
        <taxon>Lysobacterales</taxon>
        <taxon>Lysobacteraceae</taxon>
        <taxon>Xanthomonas</taxon>
    </lineage>
</organism>
<proteinExistence type="inferred from homology"/>
<keyword id="KW-0067">ATP-binding</keyword>
<keyword id="KW-0963">Cytoplasm</keyword>
<keyword id="KW-0460">Magnesium</keyword>
<keyword id="KW-0479">Metal-binding</keyword>
<keyword id="KW-0547">Nucleotide-binding</keyword>
<keyword id="KW-0554">One-carbon metabolism</keyword>
<keyword id="KW-0630">Potassium</keyword>
<keyword id="KW-0808">Transferase</keyword>
<evidence type="ECO:0000255" key="1">
    <source>
        <dbReference type="HAMAP-Rule" id="MF_00086"/>
    </source>
</evidence>
<comment type="function">
    <text evidence="1">Catalyzes the formation of S-adenosylmethionine (AdoMet) from methionine and ATP. The overall synthetic reaction is composed of two sequential steps, AdoMet formation and the subsequent tripolyphosphate hydrolysis which occurs prior to release of AdoMet from the enzyme.</text>
</comment>
<comment type="catalytic activity">
    <reaction evidence="1">
        <text>L-methionine + ATP + H2O = S-adenosyl-L-methionine + phosphate + diphosphate</text>
        <dbReference type="Rhea" id="RHEA:21080"/>
        <dbReference type="ChEBI" id="CHEBI:15377"/>
        <dbReference type="ChEBI" id="CHEBI:30616"/>
        <dbReference type="ChEBI" id="CHEBI:33019"/>
        <dbReference type="ChEBI" id="CHEBI:43474"/>
        <dbReference type="ChEBI" id="CHEBI:57844"/>
        <dbReference type="ChEBI" id="CHEBI:59789"/>
        <dbReference type="EC" id="2.5.1.6"/>
    </reaction>
</comment>
<comment type="cofactor">
    <cofactor evidence="1">
        <name>Mg(2+)</name>
        <dbReference type="ChEBI" id="CHEBI:18420"/>
    </cofactor>
    <text evidence="1">Binds 2 divalent ions per subunit.</text>
</comment>
<comment type="cofactor">
    <cofactor evidence="1">
        <name>K(+)</name>
        <dbReference type="ChEBI" id="CHEBI:29103"/>
    </cofactor>
    <text evidence="1">Binds 1 potassium ion per subunit.</text>
</comment>
<comment type="pathway">
    <text evidence="1">Amino-acid biosynthesis; S-adenosyl-L-methionine biosynthesis; S-adenosyl-L-methionine from L-methionine: step 1/1.</text>
</comment>
<comment type="subunit">
    <text evidence="1">Homotetramer; dimer of dimers.</text>
</comment>
<comment type="subcellular location">
    <subcellularLocation>
        <location evidence="1">Cytoplasm</location>
    </subcellularLocation>
</comment>
<comment type="similarity">
    <text evidence="1">Belongs to the AdoMet synthase family.</text>
</comment>